<comment type="function">
    <text evidence="1">Catalyzes the folate-dependent formation of 5-methyl-uridine at position 54 (M-5-U54) in all tRNAs.</text>
</comment>
<comment type="catalytic activity">
    <reaction evidence="1">
        <text>uridine(54) in tRNA + (6R)-5,10-methylene-5,6,7,8-tetrahydrofolate + NADH + H(+) = 5-methyluridine(54) in tRNA + (6S)-5,6,7,8-tetrahydrofolate + NAD(+)</text>
        <dbReference type="Rhea" id="RHEA:16873"/>
        <dbReference type="Rhea" id="RHEA-COMP:10167"/>
        <dbReference type="Rhea" id="RHEA-COMP:10193"/>
        <dbReference type="ChEBI" id="CHEBI:15378"/>
        <dbReference type="ChEBI" id="CHEBI:15636"/>
        <dbReference type="ChEBI" id="CHEBI:57453"/>
        <dbReference type="ChEBI" id="CHEBI:57540"/>
        <dbReference type="ChEBI" id="CHEBI:57945"/>
        <dbReference type="ChEBI" id="CHEBI:65315"/>
        <dbReference type="ChEBI" id="CHEBI:74447"/>
        <dbReference type="EC" id="2.1.1.74"/>
    </reaction>
</comment>
<comment type="catalytic activity">
    <reaction evidence="1">
        <text>uridine(54) in tRNA + (6R)-5,10-methylene-5,6,7,8-tetrahydrofolate + NADPH + H(+) = 5-methyluridine(54) in tRNA + (6S)-5,6,7,8-tetrahydrofolate + NADP(+)</text>
        <dbReference type="Rhea" id="RHEA:62372"/>
        <dbReference type="Rhea" id="RHEA-COMP:10167"/>
        <dbReference type="Rhea" id="RHEA-COMP:10193"/>
        <dbReference type="ChEBI" id="CHEBI:15378"/>
        <dbReference type="ChEBI" id="CHEBI:15636"/>
        <dbReference type="ChEBI" id="CHEBI:57453"/>
        <dbReference type="ChEBI" id="CHEBI:57783"/>
        <dbReference type="ChEBI" id="CHEBI:58349"/>
        <dbReference type="ChEBI" id="CHEBI:65315"/>
        <dbReference type="ChEBI" id="CHEBI:74447"/>
        <dbReference type="EC" id="2.1.1.74"/>
    </reaction>
</comment>
<comment type="cofactor">
    <cofactor evidence="1">
        <name>FAD</name>
        <dbReference type="ChEBI" id="CHEBI:57692"/>
    </cofactor>
</comment>
<comment type="subcellular location">
    <subcellularLocation>
        <location evidence="1">Cytoplasm</location>
    </subcellularLocation>
</comment>
<comment type="similarity">
    <text evidence="1">Belongs to the MnmG family. TrmFO subfamily.</text>
</comment>
<comment type="sequence caution" evidence="2">
    <conflict type="erroneous initiation">
        <sequence resource="EMBL-CDS" id="ABY32256"/>
    </conflict>
</comment>
<gene>
    <name evidence="1" type="primary">trmFO</name>
    <name type="ordered locus">Mext_3885</name>
</gene>
<accession>A9VXT4</accession>
<feature type="chain" id="PRO_0000346357" description="Methylenetetrahydrofolate--tRNA-(uracil-5-)-methyltransferase TrmFO">
    <location>
        <begin position="1"/>
        <end position="474"/>
    </location>
</feature>
<feature type="binding site" evidence="1">
    <location>
        <begin position="9"/>
        <end position="14"/>
    </location>
    <ligand>
        <name>FAD</name>
        <dbReference type="ChEBI" id="CHEBI:57692"/>
    </ligand>
</feature>
<sequence>MTNPIHIVGGGLAGSEAAWQVAQGGRTVVLHEMRPVRATDAHHTDGLAELVCSNSFRSDDANGNAVGLLHQEMRSLDSLIMRTADAHQVPAGGALAVDREGFSRAVTAALEDHPNITILREEVAGLPPEDWGSTILATGPLTSPALAEAVGTLTGRESLAFFDAIAPIVHRDSIDMGKAWFQSRYDKAGPGGTGADYLNCPMDREQYEAFVAALIAGEKTAFKEWEASTPYFDGCLPIEVMAERGPETLRHGPMKPVGLTNPHNPTVKAYAIVQLRQDNALGTLFNMVGFQTKLRHAEQVRVFRTIPGLENAEFARLGGLHRNTYLDSPRLLDATLRLKARPQLRFAGQITGCEGYVESAAVGLMAGRYALAEAEGQTLAPLPPTTALGALIGHITGGHVEATEEAERNAPRSFQPMNVNFGLFPPLAQMPRNETGKRLRGPEKAALKKRALTDRARADLAAWMTGERLPHAAE</sequence>
<proteinExistence type="inferred from homology"/>
<dbReference type="EC" id="2.1.1.74" evidence="1"/>
<dbReference type="EMBL" id="CP000908">
    <property type="protein sequence ID" value="ABY32256.1"/>
    <property type="status" value="ALT_INIT"/>
    <property type="molecule type" value="Genomic_DNA"/>
</dbReference>
<dbReference type="RefSeq" id="WP_042508977.1">
    <property type="nucleotide sequence ID" value="NC_010172.1"/>
</dbReference>
<dbReference type="SMR" id="A9VXT4"/>
<dbReference type="KEGG" id="mex:Mext_3885"/>
<dbReference type="eggNOG" id="COG1206">
    <property type="taxonomic scope" value="Bacteria"/>
</dbReference>
<dbReference type="HOGENOM" id="CLU_033057_1_0_5"/>
<dbReference type="BioCyc" id="MEXT419610:MEXT_RS19500-MONOMER"/>
<dbReference type="GO" id="GO:0005829">
    <property type="term" value="C:cytosol"/>
    <property type="evidence" value="ECO:0007669"/>
    <property type="project" value="TreeGrafter"/>
</dbReference>
<dbReference type="GO" id="GO:0050660">
    <property type="term" value="F:flavin adenine dinucleotide binding"/>
    <property type="evidence" value="ECO:0007669"/>
    <property type="project" value="UniProtKB-UniRule"/>
</dbReference>
<dbReference type="GO" id="GO:0047151">
    <property type="term" value="F:tRNA (uracil(54)-C5)-methyltransferase activity, 5,10-methylenetetrahydrofolate-dependent"/>
    <property type="evidence" value="ECO:0007669"/>
    <property type="project" value="UniProtKB-UniRule"/>
</dbReference>
<dbReference type="GO" id="GO:0030488">
    <property type="term" value="P:tRNA methylation"/>
    <property type="evidence" value="ECO:0007669"/>
    <property type="project" value="TreeGrafter"/>
</dbReference>
<dbReference type="GO" id="GO:0002098">
    <property type="term" value="P:tRNA wobble uridine modification"/>
    <property type="evidence" value="ECO:0007669"/>
    <property type="project" value="TreeGrafter"/>
</dbReference>
<dbReference type="Gene3D" id="3.50.50.60">
    <property type="entry name" value="FAD/NAD(P)-binding domain"/>
    <property type="match status" value="2"/>
</dbReference>
<dbReference type="HAMAP" id="MF_01037">
    <property type="entry name" value="TrmFO"/>
    <property type="match status" value="1"/>
</dbReference>
<dbReference type="InterPro" id="IPR036188">
    <property type="entry name" value="FAD/NAD-bd_sf"/>
</dbReference>
<dbReference type="InterPro" id="IPR002218">
    <property type="entry name" value="MnmG-rel"/>
</dbReference>
<dbReference type="InterPro" id="IPR020595">
    <property type="entry name" value="MnmG-rel_CS"/>
</dbReference>
<dbReference type="InterPro" id="IPR040131">
    <property type="entry name" value="MnmG_N"/>
</dbReference>
<dbReference type="InterPro" id="IPR004417">
    <property type="entry name" value="TrmFO"/>
</dbReference>
<dbReference type="NCBIfam" id="TIGR00137">
    <property type="entry name" value="gid_trmFO"/>
    <property type="match status" value="1"/>
</dbReference>
<dbReference type="NCBIfam" id="NF003739">
    <property type="entry name" value="PRK05335.1"/>
    <property type="match status" value="1"/>
</dbReference>
<dbReference type="PANTHER" id="PTHR11806">
    <property type="entry name" value="GLUCOSE INHIBITED DIVISION PROTEIN A"/>
    <property type="match status" value="1"/>
</dbReference>
<dbReference type="PANTHER" id="PTHR11806:SF2">
    <property type="entry name" value="METHYLENETETRAHYDROFOLATE--TRNA-(URACIL-5-)-METHYLTRANSFERASE TRMFO"/>
    <property type="match status" value="1"/>
</dbReference>
<dbReference type="Pfam" id="PF01134">
    <property type="entry name" value="GIDA"/>
    <property type="match status" value="1"/>
</dbReference>
<dbReference type="SUPFAM" id="SSF51905">
    <property type="entry name" value="FAD/NAD(P)-binding domain"/>
    <property type="match status" value="1"/>
</dbReference>
<dbReference type="PROSITE" id="PS01281">
    <property type="entry name" value="GIDA_2"/>
    <property type="match status" value="1"/>
</dbReference>
<organism>
    <name type="scientific">Methylorubrum extorquens (strain PA1)</name>
    <name type="common">Methylobacterium extorquens</name>
    <dbReference type="NCBI Taxonomy" id="419610"/>
    <lineage>
        <taxon>Bacteria</taxon>
        <taxon>Pseudomonadati</taxon>
        <taxon>Pseudomonadota</taxon>
        <taxon>Alphaproteobacteria</taxon>
        <taxon>Hyphomicrobiales</taxon>
        <taxon>Methylobacteriaceae</taxon>
        <taxon>Methylorubrum</taxon>
    </lineage>
</organism>
<evidence type="ECO:0000255" key="1">
    <source>
        <dbReference type="HAMAP-Rule" id="MF_01037"/>
    </source>
</evidence>
<evidence type="ECO:0000305" key="2"/>
<name>TRMFO_METEP</name>
<reference key="1">
    <citation type="submission" date="2007-12" db="EMBL/GenBank/DDBJ databases">
        <title>Complete sequence of Methylobacterium extorquens PA1.</title>
        <authorList>
            <consortium name="US DOE Joint Genome Institute"/>
            <person name="Copeland A."/>
            <person name="Lucas S."/>
            <person name="Lapidus A."/>
            <person name="Barry K."/>
            <person name="Glavina del Rio T."/>
            <person name="Dalin E."/>
            <person name="Tice H."/>
            <person name="Pitluck S."/>
            <person name="Saunders E."/>
            <person name="Brettin T."/>
            <person name="Bruce D."/>
            <person name="Detter J.C."/>
            <person name="Han C."/>
            <person name="Schmutz J."/>
            <person name="Larimer F."/>
            <person name="Land M."/>
            <person name="Hauser L."/>
            <person name="Kyrpides N."/>
            <person name="Kim E."/>
            <person name="Marx C."/>
            <person name="Richardson P."/>
        </authorList>
    </citation>
    <scope>NUCLEOTIDE SEQUENCE [LARGE SCALE GENOMIC DNA]</scope>
    <source>
        <strain>PA1</strain>
    </source>
</reference>
<keyword id="KW-0963">Cytoplasm</keyword>
<keyword id="KW-0274">FAD</keyword>
<keyword id="KW-0285">Flavoprotein</keyword>
<keyword id="KW-0489">Methyltransferase</keyword>
<keyword id="KW-0520">NAD</keyword>
<keyword id="KW-0521">NADP</keyword>
<keyword id="KW-0808">Transferase</keyword>
<keyword id="KW-0819">tRNA processing</keyword>
<protein>
    <recommendedName>
        <fullName evidence="1">Methylenetetrahydrofolate--tRNA-(uracil-5-)-methyltransferase TrmFO</fullName>
        <ecNumber evidence="1">2.1.1.74</ecNumber>
    </recommendedName>
    <alternativeName>
        <fullName evidence="1">Folate-dependent tRNA (uracil-5-)-methyltransferase</fullName>
    </alternativeName>
    <alternativeName>
        <fullName evidence="1">Folate-dependent tRNA(M-5-U54)-methyltransferase</fullName>
    </alternativeName>
</protein>